<reference key="1">
    <citation type="journal article" date="1999" name="Nature">
        <title>Sequence and analysis of chromosome 2 of the plant Arabidopsis thaliana.</title>
        <authorList>
            <person name="Lin X."/>
            <person name="Kaul S."/>
            <person name="Rounsley S.D."/>
            <person name="Shea T.P."/>
            <person name="Benito M.-I."/>
            <person name="Town C.D."/>
            <person name="Fujii C.Y."/>
            <person name="Mason T.M."/>
            <person name="Bowman C.L."/>
            <person name="Barnstead M.E."/>
            <person name="Feldblyum T.V."/>
            <person name="Buell C.R."/>
            <person name="Ketchum K.A."/>
            <person name="Lee J.J."/>
            <person name="Ronning C.M."/>
            <person name="Koo H.L."/>
            <person name="Moffat K.S."/>
            <person name="Cronin L.A."/>
            <person name="Shen M."/>
            <person name="Pai G."/>
            <person name="Van Aken S."/>
            <person name="Umayam L."/>
            <person name="Tallon L.J."/>
            <person name="Gill J.E."/>
            <person name="Adams M.D."/>
            <person name="Carrera A.J."/>
            <person name="Creasy T.H."/>
            <person name="Goodman H.M."/>
            <person name="Somerville C.R."/>
            <person name="Copenhaver G.P."/>
            <person name="Preuss D."/>
            <person name="Nierman W.C."/>
            <person name="White O."/>
            <person name="Eisen J.A."/>
            <person name="Salzberg S.L."/>
            <person name="Fraser C.M."/>
            <person name="Venter J.C."/>
        </authorList>
    </citation>
    <scope>NUCLEOTIDE SEQUENCE [LARGE SCALE GENOMIC DNA]</scope>
    <source>
        <strain>cv. Columbia</strain>
    </source>
</reference>
<reference key="2">
    <citation type="journal article" date="2017" name="Plant J.">
        <title>Araport11: a complete reannotation of the Arabidopsis thaliana reference genome.</title>
        <authorList>
            <person name="Cheng C.Y."/>
            <person name="Krishnakumar V."/>
            <person name="Chan A.P."/>
            <person name="Thibaud-Nissen F."/>
            <person name="Schobel S."/>
            <person name="Town C.D."/>
        </authorList>
    </citation>
    <scope>GENOME REANNOTATION</scope>
    <source>
        <strain>cv. Columbia</strain>
    </source>
</reference>
<reference key="3">
    <citation type="journal article" date="2004" name="Genome Res.">
        <title>Whole genome sequence comparisons and 'full-length' cDNA sequences: a combined approach to evaluate and improve Arabidopsis genome annotation.</title>
        <authorList>
            <person name="Castelli V."/>
            <person name="Aury J.-M."/>
            <person name="Jaillon O."/>
            <person name="Wincker P."/>
            <person name="Clepet C."/>
            <person name="Menard M."/>
            <person name="Cruaud C."/>
            <person name="Quetier F."/>
            <person name="Scarpelli C."/>
            <person name="Schaechter V."/>
            <person name="Temple G."/>
            <person name="Caboche M."/>
            <person name="Weissenbach J."/>
            <person name="Salanoubat M."/>
        </authorList>
    </citation>
    <scope>NUCLEOTIDE SEQUENCE [LARGE SCALE MRNA]</scope>
    <source>
        <strain>cv. Columbia</strain>
    </source>
</reference>
<reference key="4">
    <citation type="journal article" date="2012" name="Plant Physiol.">
        <title>Proteasome-mediated turnover of Arabidopsis MED25 is coupled to the activation of FLOWERING LOCUS T transcription.</title>
        <authorList>
            <person name="Inigo S."/>
            <person name="Giraldez A.N."/>
            <person name="Chory J."/>
            <person name="Cerdan P.D."/>
        </authorList>
    </citation>
    <scope>FUNCTION</scope>
    <scope>INTERACTION WITH MED25 AND UBC11</scope>
    <scope>DISRUPTION PHENOTYPE</scope>
</reference>
<dbReference type="EC" id="2.3.2.27"/>
<dbReference type="EMBL" id="AC006248">
    <property type="protein sequence ID" value="AAD17397.1"/>
    <property type="molecule type" value="Genomic_DNA"/>
</dbReference>
<dbReference type="EMBL" id="CP002685">
    <property type="protein sequence ID" value="AEC06411.1"/>
    <property type="molecule type" value="Genomic_DNA"/>
</dbReference>
<dbReference type="EMBL" id="CP002685">
    <property type="protein sequence ID" value="AEC06412.1"/>
    <property type="molecule type" value="Genomic_DNA"/>
</dbReference>
<dbReference type="EMBL" id="CP002685">
    <property type="protein sequence ID" value="AEC06413.1"/>
    <property type="molecule type" value="Genomic_DNA"/>
</dbReference>
<dbReference type="EMBL" id="CP002685">
    <property type="protein sequence ID" value="ANM62927.1"/>
    <property type="molecule type" value="Genomic_DNA"/>
</dbReference>
<dbReference type="EMBL" id="CP002685">
    <property type="protein sequence ID" value="ANM62928.1"/>
    <property type="molecule type" value="Genomic_DNA"/>
</dbReference>
<dbReference type="EMBL" id="BX820346">
    <property type="status" value="NOT_ANNOTATED_CDS"/>
    <property type="molecule type" value="mRNA"/>
</dbReference>
<dbReference type="PIR" id="B84530">
    <property type="entry name" value="B84530"/>
</dbReference>
<dbReference type="RefSeq" id="NP_001118324.1">
    <molecule id="Q9ZQF9-1"/>
    <property type="nucleotide sequence ID" value="NM_001124852.5"/>
</dbReference>
<dbReference type="RefSeq" id="NP_001325050.1">
    <molecule id="Q9ZQF9-1"/>
    <property type="nucleotide sequence ID" value="NM_001335453.1"/>
</dbReference>
<dbReference type="RefSeq" id="NP_001325051.1">
    <molecule id="Q9ZQF9-1"/>
    <property type="nucleotide sequence ID" value="NM_001335455.1"/>
</dbReference>
<dbReference type="RefSeq" id="NP_179155.1">
    <molecule id="Q9ZQF9-1"/>
    <property type="nucleotide sequence ID" value="NM_127113.4"/>
</dbReference>
<dbReference type="RefSeq" id="NP_973470.1">
    <molecule id="Q9ZQF9-1"/>
    <property type="nucleotide sequence ID" value="NM_201741.2"/>
</dbReference>
<dbReference type="SMR" id="Q9ZQF9"/>
<dbReference type="BioGRID" id="1404">
    <property type="interactions" value="1"/>
</dbReference>
<dbReference type="FunCoup" id="Q9ZQF9">
    <property type="interactions" value="1779"/>
</dbReference>
<dbReference type="STRING" id="3702.Q9ZQF9"/>
<dbReference type="GlyGen" id="Q9ZQF9">
    <property type="glycosylation" value="1 site"/>
</dbReference>
<dbReference type="iPTMnet" id="Q9ZQF9"/>
<dbReference type="PaxDb" id="3702-AT2G15530.4"/>
<dbReference type="ProteomicsDB" id="238695">
    <molecule id="Q9ZQF9-1"/>
</dbReference>
<dbReference type="EnsemblPlants" id="AT2G15530.1">
    <molecule id="Q9ZQF9-1"/>
    <property type="protein sequence ID" value="AT2G15530.1"/>
    <property type="gene ID" value="AT2G15530"/>
</dbReference>
<dbReference type="EnsemblPlants" id="AT2G15530.2">
    <molecule id="Q9ZQF9-1"/>
    <property type="protein sequence ID" value="AT2G15530.2"/>
    <property type="gene ID" value="AT2G15530"/>
</dbReference>
<dbReference type="EnsemblPlants" id="AT2G15530.3">
    <molecule id="Q9ZQF9-1"/>
    <property type="protein sequence ID" value="AT2G15530.3"/>
    <property type="gene ID" value="AT2G15530"/>
</dbReference>
<dbReference type="EnsemblPlants" id="AT2G15530.5">
    <molecule id="Q9ZQF9-1"/>
    <property type="protein sequence ID" value="AT2G15530.5"/>
    <property type="gene ID" value="AT2G15530"/>
</dbReference>
<dbReference type="EnsemblPlants" id="AT2G15530.7">
    <molecule id="Q9ZQF9-1"/>
    <property type="protein sequence ID" value="AT2G15530.7"/>
    <property type="gene ID" value="AT2G15530"/>
</dbReference>
<dbReference type="GeneID" id="816045"/>
<dbReference type="Gramene" id="AT2G15530.1">
    <molecule id="Q9ZQF9-1"/>
    <property type="protein sequence ID" value="AT2G15530.1"/>
    <property type="gene ID" value="AT2G15530"/>
</dbReference>
<dbReference type="Gramene" id="AT2G15530.2">
    <molecule id="Q9ZQF9-1"/>
    <property type="protein sequence ID" value="AT2G15530.2"/>
    <property type="gene ID" value="AT2G15530"/>
</dbReference>
<dbReference type="Gramene" id="AT2G15530.3">
    <molecule id="Q9ZQF9-1"/>
    <property type="protein sequence ID" value="AT2G15530.3"/>
    <property type="gene ID" value="AT2G15530"/>
</dbReference>
<dbReference type="Gramene" id="AT2G15530.5">
    <molecule id="Q9ZQF9-1"/>
    <property type="protein sequence ID" value="AT2G15530.5"/>
    <property type="gene ID" value="AT2G15530"/>
</dbReference>
<dbReference type="Gramene" id="AT2G15530.7">
    <molecule id="Q9ZQF9-1"/>
    <property type="protein sequence ID" value="AT2G15530.7"/>
    <property type="gene ID" value="AT2G15530"/>
</dbReference>
<dbReference type="KEGG" id="ath:AT2G15530"/>
<dbReference type="Araport" id="AT2G15530"/>
<dbReference type="TAIR" id="AT2G15530">
    <property type="gene designation" value="MBR1"/>
</dbReference>
<dbReference type="eggNOG" id="KOG0800">
    <property type="taxonomic scope" value="Eukaryota"/>
</dbReference>
<dbReference type="HOGENOM" id="CLU_024479_0_0_1"/>
<dbReference type="InParanoid" id="Q9ZQF9"/>
<dbReference type="OMA" id="AFHSARN"/>
<dbReference type="PhylomeDB" id="Q9ZQF9"/>
<dbReference type="UniPathway" id="UPA00143"/>
<dbReference type="PRO" id="PR:Q9ZQF9"/>
<dbReference type="Proteomes" id="UP000006548">
    <property type="component" value="Chromosome 2"/>
</dbReference>
<dbReference type="ExpressionAtlas" id="Q9ZQF9">
    <property type="expression patterns" value="baseline and differential"/>
</dbReference>
<dbReference type="GO" id="GO:0061630">
    <property type="term" value="F:ubiquitin protein ligase activity"/>
    <property type="evidence" value="ECO:0007669"/>
    <property type="project" value="InterPro"/>
</dbReference>
<dbReference type="GO" id="GO:0008270">
    <property type="term" value="F:zinc ion binding"/>
    <property type="evidence" value="ECO:0007669"/>
    <property type="project" value="UniProtKB-KW"/>
</dbReference>
<dbReference type="GO" id="GO:0009908">
    <property type="term" value="P:flower development"/>
    <property type="evidence" value="ECO:0007669"/>
    <property type="project" value="UniProtKB-KW"/>
</dbReference>
<dbReference type="GO" id="GO:0043161">
    <property type="term" value="P:proteasome-mediated ubiquitin-dependent protein catabolic process"/>
    <property type="evidence" value="ECO:0000314"/>
    <property type="project" value="UniProtKB"/>
</dbReference>
<dbReference type="GO" id="GO:0016567">
    <property type="term" value="P:protein ubiquitination"/>
    <property type="evidence" value="ECO:0007669"/>
    <property type="project" value="UniProtKB-UniPathway"/>
</dbReference>
<dbReference type="GO" id="GO:0010228">
    <property type="term" value="P:vegetative to reproductive phase transition of meristem"/>
    <property type="evidence" value="ECO:0000316"/>
    <property type="project" value="UniProtKB"/>
</dbReference>
<dbReference type="CDD" id="cd23113">
    <property type="entry name" value="RING-H2_MBR"/>
    <property type="match status" value="1"/>
</dbReference>
<dbReference type="FunFam" id="3.30.40.10:FF:000309">
    <property type="entry name" value="E3 ubiquitin-protein ligase MBR2"/>
    <property type="match status" value="1"/>
</dbReference>
<dbReference type="Gene3D" id="3.30.40.10">
    <property type="entry name" value="Zinc/RING finger domain, C3HC4 (zinc finger)"/>
    <property type="match status" value="1"/>
</dbReference>
<dbReference type="InterPro" id="IPR045191">
    <property type="entry name" value="MBR1/2-like"/>
</dbReference>
<dbReference type="InterPro" id="IPR001841">
    <property type="entry name" value="Znf_RING"/>
</dbReference>
<dbReference type="InterPro" id="IPR013083">
    <property type="entry name" value="Znf_RING/FYVE/PHD"/>
</dbReference>
<dbReference type="PANTHER" id="PTHR22937:SF224">
    <property type="entry name" value="E3 UBIQUITIN-PROTEIN LIGASE MBR1-RELATED"/>
    <property type="match status" value="1"/>
</dbReference>
<dbReference type="PANTHER" id="PTHR22937">
    <property type="entry name" value="E3 UBIQUITIN-PROTEIN LIGASE RNF165"/>
    <property type="match status" value="1"/>
</dbReference>
<dbReference type="Pfam" id="PF13639">
    <property type="entry name" value="zf-RING_2"/>
    <property type="match status" value="1"/>
</dbReference>
<dbReference type="SMART" id="SM00184">
    <property type="entry name" value="RING"/>
    <property type="match status" value="1"/>
</dbReference>
<dbReference type="SUPFAM" id="SSF57850">
    <property type="entry name" value="RING/U-box"/>
    <property type="match status" value="1"/>
</dbReference>
<dbReference type="PROSITE" id="PS50089">
    <property type="entry name" value="ZF_RING_2"/>
    <property type="match status" value="1"/>
</dbReference>
<accession>Q9ZQF9</accession>
<organism>
    <name type="scientific">Arabidopsis thaliana</name>
    <name type="common">Mouse-ear cress</name>
    <dbReference type="NCBI Taxonomy" id="3702"/>
    <lineage>
        <taxon>Eukaryota</taxon>
        <taxon>Viridiplantae</taxon>
        <taxon>Streptophyta</taxon>
        <taxon>Embryophyta</taxon>
        <taxon>Tracheophyta</taxon>
        <taxon>Spermatophyta</taxon>
        <taxon>Magnoliopsida</taxon>
        <taxon>eudicotyledons</taxon>
        <taxon>Gunneridae</taxon>
        <taxon>Pentapetalae</taxon>
        <taxon>rosids</taxon>
        <taxon>malvids</taxon>
        <taxon>Brassicales</taxon>
        <taxon>Brassicaceae</taxon>
        <taxon>Camelineae</taxon>
        <taxon>Arabidopsis</taxon>
    </lineage>
</organism>
<evidence type="ECO:0000255" key="1">
    <source>
        <dbReference type="PROSITE-ProRule" id="PRU00175"/>
    </source>
</evidence>
<evidence type="ECO:0000256" key="2">
    <source>
        <dbReference type="SAM" id="MobiDB-lite"/>
    </source>
</evidence>
<evidence type="ECO:0000269" key="3">
    <source>
    </source>
</evidence>
<evidence type="ECO:0000305" key="4"/>
<sequence>MNPMQGPRSIGGSSTEVNQVDGESIYCTETSLNTMLNPADTGFPNNSTPSGRPTYASSSSHAAQDHTWWRFGESSSIPGPSDQVNSIGIKTSHQLPQDGTHHFVGYGSEGRQTGLNGMMVDGGVHAGSHIRNVPSFLRGSSSNPMPQHVDMSMDMDSDNCNAQTSGVVIRHNSYGSSLGSSVQAAGESSSGPASPFGGWGSSCKRKALEGSPSHYFSGETPNRIVQTENSASHASLSQYGASSSLSLATPSQSSPNVTNHFGRTEQMFGSGGGRAVAASAFHSTRNTDTLSRAGRRLNPRQPQESVAFSVSHGGTSVRPTGSLQQNLPLNSPFVDPPDVRSSSITSGSNTGENQTNIVHLPALTRNIHQYAWDASFSSRASNPSGIGMPAERLGPQWETPRSNQEQPLFAPATDMRQPVHDLWNFARGSPGSSVDSLFVPRAGPSSAIHTPQPNPTWIPPQNAPPHNPSRTSELSPWSLFPSIESPSASHGGPLPLLPAGPSVSSNEVTMPSSSNSRSHRSRHRRSGLLLERQNELLHLRHIGRSLAADGNGRNQIISEIRQVLHAMRRGENLRVEDYMVFDPLIYQGMTDMHDRHREMRLDVDNMSYEELLALGERIGDVSTGLSEEVILKAMKQHKHTSSSPSSVELHQNIEPCCICQEEYVEGDNLGTLKCGHEFHKDCIKQWVMIKNLCPICKTEALKTP</sequence>
<gene>
    <name type="primary">MBR1</name>
    <name type="ordered locus">At2g15530</name>
    <name type="ORF">F9O13</name>
</gene>
<feature type="chain" id="PRO_0000429416" description="E3 ubiquitin-protein ligase MBR1">
    <location>
        <begin position="1"/>
        <end position="704"/>
    </location>
</feature>
<feature type="zinc finger region" description="RING-type; atypical" evidence="1">
    <location>
        <begin position="656"/>
        <end position="697"/>
    </location>
</feature>
<feature type="region of interest" description="Disordered" evidence="2">
    <location>
        <begin position="1"/>
        <end position="20"/>
    </location>
</feature>
<feature type="region of interest" description="Disordered" evidence="2">
    <location>
        <begin position="37"/>
        <end position="61"/>
    </location>
</feature>
<feature type="region of interest" description="Disordered" evidence="2">
    <location>
        <begin position="176"/>
        <end position="197"/>
    </location>
</feature>
<feature type="region of interest" description="Disordered" evidence="2">
    <location>
        <begin position="245"/>
        <end position="354"/>
    </location>
</feature>
<feature type="region of interest" description="Disordered" evidence="2">
    <location>
        <begin position="381"/>
        <end position="403"/>
    </location>
</feature>
<feature type="region of interest" description="Disordered" evidence="2">
    <location>
        <begin position="436"/>
        <end position="525"/>
    </location>
</feature>
<feature type="compositionally biased region" description="Polar residues" evidence="2">
    <location>
        <begin position="43"/>
        <end position="61"/>
    </location>
</feature>
<feature type="compositionally biased region" description="Low complexity" evidence="2">
    <location>
        <begin position="184"/>
        <end position="196"/>
    </location>
</feature>
<feature type="compositionally biased region" description="Low complexity" evidence="2">
    <location>
        <begin position="245"/>
        <end position="255"/>
    </location>
</feature>
<feature type="compositionally biased region" description="Polar residues" evidence="2">
    <location>
        <begin position="281"/>
        <end position="290"/>
    </location>
</feature>
<feature type="compositionally biased region" description="Polar residues" evidence="2">
    <location>
        <begin position="300"/>
        <end position="329"/>
    </location>
</feature>
<feature type="compositionally biased region" description="Polar residues" evidence="2">
    <location>
        <begin position="340"/>
        <end position="354"/>
    </location>
</feature>
<feature type="compositionally biased region" description="Pro residues" evidence="2">
    <location>
        <begin position="452"/>
        <end position="467"/>
    </location>
</feature>
<feature type="compositionally biased region" description="Low complexity" evidence="2">
    <location>
        <begin position="485"/>
        <end position="505"/>
    </location>
</feature>
<protein>
    <recommendedName>
        <fullName>E3 ubiquitin-protein ligase MBR1</fullName>
        <ecNumber>2.3.2.27</ecNumber>
    </recommendedName>
    <alternativeName>
        <fullName>MED25-binding RING-H2 protein 1</fullName>
    </alternativeName>
    <alternativeName>
        <fullName>RING-H2 finger MBR1</fullName>
    </alternativeName>
    <alternativeName>
        <fullName evidence="4">RING-type E3 ubiquitin transferase MBR1</fullName>
    </alternativeName>
</protein>
<proteinExistence type="evidence at protein level"/>
<name>MBR1_ARATH</name>
<comment type="function">
    <text evidence="3">E3 ubiquitin-protein ligase that functions as a regulator of MED25 stability by targeting MED25 for degradation in a RING-H2-dependent way. Proteasome-dependent degradation of MED25 seems to activate its function as positive regulator of FLOWERING LOCUS T (FT) and is important to induce the expression of FT and consequently to promote flowering.</text>
</comment>
<comment type="catalytic activity">
    <reaction>
        <text>S-ubiquitinyl-[E2 ubiquitin-conjugating enzyme]-L-cysteine + [acceptor protein]-L-lysine = [E2 ubiquitin-conjugating enzyme]-L-cysteine + N(6)-ubiquitinyl-[acceptor protein]-L-lysine.</text>
        <dbReference type="EC" id="2.3.2.27"/>
    </reaction>
</comment>
<comment type="pathway">
    <text>Protein modification; protein ubiquitination.</text>
</comment>
<comment type="subunit">
    <text evidence="3">Interacts with MED25 and UBC11.</text>
</comment>
<comment type="alternative products">
    <event type="alternative splicing"/>
    <isoform>
        <id>Q9ZQF9-1</id>
        <name>1</name>
        <sequence type="displayed"/>
    </isoform>
    <text>A number of isoforms are produced. According to EST sequences.</text>
</comment>
<comment type="domain">
    <text evidence="4">The RING-type zinc finger domain mediates binding to an E2 ubiquitin-conjugating enzyme.</text>
</comment>
<comment type="disruption phenotype">
    <text evidence="3">No visible phenotype under normal growth conditions, but the double mutant plants mbr1-1 and mbr2-1 show delayed flowering.</text>
</comment>
<comment type="similarity">
    <text evidence="4">Belongs to the RING-type zinc finger family.</text>
</comment>
<keyword id="KW-0025">Alternative splicing</keyword>
<keyword id="KW-0287">Flowering</keyword>
<keyword id="KW-0479">Metal-binding</keyword>
<keyword id="KW-1185">Reference proteome</keyword>
<keyword id="KW-0808">Transferase</keyword>
<keyword id="KW-0833">Ubl conjugation pathway</keyword>
<keyword id="KW-0862">Zinc</keyword>
<keyword id="KW-0863">Zinc-finger</keyword>